<comment type="function">
    <text evidence="1">Catalyzes the reversible formation of acyl-phosphate (acyl-PO(4)) from acyl-[acyl-carrier-protein] (acyl-ACP). This enzyme utilizes acyl-ACP as fatty acyl donor, but not acyl-CoA.</text>
</comment>
<comment type="catalytic activity">
    <reaction evidence="1">
        <text>a fatty acyl-[ACP] + phosphate = an acyl phosphate + holo-[ACP]</text>
        <dbReference type="Rhea" id="RHEA:42292"/>
        <dbReference type="Rhea" id="RHEA-COMP:9685"/>
        <dbReference type="Rhea" id="RHEA-COMP:14125"/>
        <dbReference type="ChEBI" id="CHEBI:43474"/>
        <dbReference type="ChEBI" id="CHEBI:59918"/>
        <dbReference type="ChEBI" id="CHEBI:64479"/>
        <dbReference type="ChEBI" id="CHEBI:138651"/>
        <dbReference type="EC" id="2.3.1.274"/>
    </reaction>
</comment>
<comment type="pathway">
    <text evidence="1">Lipid metabolism; phospholipid metabolism.</text>
</comment>
<comment type="subunit">
    <text evidence="1">Homodimer. Probably interacts with PlsY.</text>
</comment>
<comment type="subcellular location">
    <subcellularLocation>
        <location evidence="1">Cytoplasm</location>
    </subcellularLocation>
    <text evidence="1">Associated with the membrane possibly through PlsY.</text>
</comment>
<comment type="similarity">
    <text evidence="1">Belongs to the PlsX family.</text>
</comment>
<protein>
    <recommendedName>
        <fullName evidence="1">Phosphate acyltransferase</fullName>
        <ecNumber evidence="1">2.3.1.274</ecNumber>
    </recommendedName>
    <alternativeName>
        <fullName evidence="1">Acyl-ACP phosphotransacylase</fullName>
    </alternativeName>
    <alternativeName>
        <fullName evidence="1">Acyl-[acyl-carrier-protein]--phosphate acyltransferase</fullName>
    </alternativeName>
    <alternativeName>
        <fullName evidence="1">Phosphate-acyl-ACP acyltransferase</fullName>
    </alternativeName>
</protein>
<proteinExistence type="inferred from homology"/>
<reference key="1">
    <citation type="submission" date="2007-05" db="EMBL/GenBank/DDBJ databases">
        <title>Complete sequence of Geobacter uraniireducens Rf4.</title>
        <authorList>
            <consortium name="US DOE Joint Genome Institute"/>
            <person name="Copeland A."/>
            <person name="Lucas S."/>
            <person name="Lapidus A."/>
            <person name="Barry K."/>
            <person name="Detter J.C."/>
            <person name="Glavina del Rio T."/>
            <person name="Hammon N."/>
            <person name="Israni S."/>
            <person name="Dalin E."/>
            <person name="Tice H."/>
            <person name="Pitluck S."/>
            <person name="Chertkov O."/>
            <person name="Brettin T."/>
            <person name="Bruce D."/>
            <person name="Han C."/>
            <person name="Schmutz J."/>
            <person name="Larimer F."/>
            <person name="Land M."/>
            <person name="Hauser L."/>
            <person name="Kyrpides N."/>
            <person name="Mikhailova N."/>
            <person name="Shelobolina E."/>
            <person name="Aklujkar M."/>
            <person name="Lovley D."/>
            <person name="Richardson P."/>
        </authorList>
    </citation>
    <scope>NUCLEOTIDE SEQUENCE [LARGE SCALE GENOMIC DNA]</scope>
    <source>
        <strain>ATCC BAA-1134 / JCM 13001 / Rf4</strain>
    </source>
</reference>
<keyword id="KW-0963">Cytoplasm</keyword>
<keyword id="KW-0444">Lipid biosynthesis</keyword>
<keyword id="KW-0443">Lipid metabolism</keyword>
<keyword id="KW-0594">Phospholipid biosynthesis</keyword>
<keyword id="KW-1208">Phospholipid metabolism</keyword>
<keyword id="KW-1185">Reference proteome</keyword>
<keyword id="KW-0808">Transferase</keyword>
<evidence type="ECO:0000255" key="1">
    <source>
        <dbReference type="HAMAP-Rule" id="MF_00019"/>
    </source>
</evidence>
<feature type="chain" id="PRO_1000074167" description="Phosphate acyltransferase">
    <location>
        <begin position="1"/>
        <end position="346"/>
    </location>
</feature>
<dbReference type="EC" id="2.3.1.274" evidence="1"/>
<dbReference type="EMBL" id="CP000698">
    <property type="protein sequence ID" value="ABQ26064.1"/>
    <property type="molecule type" value="Genomic_DNA"/>
</dbReference>
<dbReference type="RefSeq" id="WP_011938767.1">
    <property type="nucleotide sequence ID" value="NC_009483.1"/>
</dbReference>
<dbReference type="SMR" id="A5GF59"/>
<dbReference type="STRING" id="351605.Gura_1874"/>
<dbReference type="KEGG" id="gur:Gura_1874"/>
<dbReference type="HOGENOM" id="CLU_039379_1_1_7"/>
<dbReference type="OrthoDB" id="9806408at2"/>
<dbReference type="UniPathway" id="UPA00085"/>
<dbReference type="Proteomes" id="UP000006695">
    <property type="component" value="Chromosome"/>
</dbReference>
<dbReference type="GO" id="GO:0005737">
    <property type="term" value="C:cytoplasm"/>
    <property type="evidence" value="ECO:0007669"/>
    <property type="project" value="UniProtKB-SubCell"/>
</dbReference>
<dbReference type="GO" id="GO:0043811">
    <property type="term" value="F:phosphate:acyl-[acyl carrier protein] acyltransferase activity"/>
    <property type="evidence" value="ECO:0007669"/>
    <property type="project" value="UniProtKB-UniRule"/>
</dbReference>
<dbReference type="GO" id="GO:0006633">
    <property type="term" value="P:fatty acid biosynthetic process"/>
    <property type="evidence" value="ECO:0007669"/>
    <property type="project" value="UniProtKB-UniRule"/>
</dbReference>
<dbReference type="GO" id="GO:0008654">
    <property type="term" value="P:phospholipid biosynthetic process"/>
    <property type="evidence" value="ECO:0007669"/>
    <property type="project" value="UniProtKB-KW"/>
</dbReference>
<dbReference type="Gene3D" id="3.40.718.10">
    <property type="entry name" value="Isopropylmalate Dehydrogenase"/>
    <property type="match status" value="1"/>
</dbReference>
<dbReference type="HAMAP" id="MF_00019">
    <property type="entry name" value="PlsX"/>
    <property type="match status" value="1"/>
</dbReference>
<dbReference type="InterPro" id="IPR003664">
    <property type="entry name" value="FA_synthesis"/>
</dbReference>
<dbReference type="InterPro" id="IPR012281">
    <property type="entry name" value="Phospholipid_synth_PlsX-like"/>
</dbReference>
<dbReference type="NCBIfam" id="TIGR00182">
    <property type="entry name" value="plsX"/>
    <property type="match status" value="1"/>
</dbReference>
<dbReference type="PANTHER" id="PTHR30100">
    <property type="entry name" value="FATTY ACID/PHOSPHOLIPID SYNTHESIS PROTEIN PLSX"/>
    <property type="match status" value="1"/>
</dbReference>
<dbReference type="PANTHER" id="PTHR30100:SF1">
    <property type="entry name" value="PHOSPHATE ACYLTRANSFERASE"/>
    <property type="match status" value="1"/>
</dbReference>
<dbReference type="Pfam" id="PF02504">
    <property type="entry name" value="FA_synthesis"/>
    <property type="match status" value="1"/>
</dbReference>
<dbReference type="PIRSF" id="PIRSF002465">
    <property type="entry name" value="Phsphlp_syn_PlsX"/>
    <property type="match status" value="1"/>
</dbReference>
<dbReference type="SUPFAM" id="SSF53659">
    <property type="entry name" value="Isocitrate/Isopropylmalate dehydrogenase-like"/>
    <property type="match status" value="1"/>
</dbReference>
<gene>
    <name evidence="1" type="primary">plsX</name>
    <name type="ordered locus">Gura_1874</name>
</gene>
<name>PLSX_GEOUR</name>
<organism>
    <name type="scientific">Geotalea uraniireducens (strain Rf4)</name>
    <name type="common">Geobacter uraniireducens</name>
    <dbReference type="NCBI Taxonomy" id="351605"/>
    <lineage>
        <taxon>Bacteria</taxon>
        <taxon>Pseudomonadati</taxon>
        <taxon>Thermodesulfobacteriota</taxon>
        <taxon>Desulfuromonadia</taxon>
        <taxon>Geobacterales</taxon>
        <taxon>Geobacteraceae</taxon>
        <taxon>Geotalea</taxon>
    </lineage>
</organism>
<accession>A5GF59</accession>
<sequence length="346" mass="37121">MRVAVDAMGGDNAPVVEVEGAVAAAGEFGIPVTLVGDTDRVNQELAKYNCKGLDITVKHASEVVGMHDSASDAVRKKKDSSIRVAFDLVKNDEAVAVVSAGNSGATMAAGMFVLKRLKGIDRPAIAQIFPTLRGKTLVLDVGGNVDCKPLHLVQFAIMGEVYARFVMGVDNPRIGLLSNGEEESKGNDLTRETSALLKNTSLDYFGYVEGRDIFNGIVDVVVCDGFVGNVVLKLSEGLAEAVGKMLKDEIKQSLLSKIGYLLSRKAFVNFKKKVDYSEYGGAPLLGIDGVGMICHGGSNAKAIKNAIRFAHEYAQKGVNQRMAEKLQENYPLYMQQLEMLKVQAAG</sequence>